<protein>
    <recommendedName>
        <fullName evidence="1">Serine hydroxymethyltransferase</fullName>
        <shortName evidence="1">SHMT</shortName>
        <shortName evidence="1">Serine methylase</shortName>
        <ecNumber evidence="1">2.1.2.1</ecNumber>
    </recommendedName>
</protein>
<evidence type="ECO:0000255" key="1">
    <source>
        <dbReference type="HAMAP-Rule" id="MF_00051"/>
    </source>
</evidence>
<accession>Q8E5C6</accession>
<name>GLYA_STRA3</name>
<sequence>MIFDKDNFKEFDQELWQAIHDEEIRQQNNIELIASENVVSKAVMAAQGSVLTNKYAEGYPSHRYYGGTDCVDVVESLAIERAKTLFNAEFANVQPHSGSQANAAAYMALIEPGDTVLGMDLAAGGHLTHGASVSFSGKTYHFVSYSVDPKTEMLDYDNILKIAQETQPKLIVAGASAYSRIIDFEKFRQIADAVDAYLMVDMAHIAGLVASGHHPSPIPYAHVTTTTTHKTLRGPRGGLILTNDEAIAKKINSAVFPGLQGGPLEHVIAAKAVALKEALDPSFKIYGEDIIKNAQAMAKVFKEDDDFHLISDGTDNHLFLVDVTKVIENGKKAQNVLEEVNITLNKNSIPFERLSPFKTSGIRIGTPAITSRGMGVEESRRIAELMIKALKNHENQDILTEVRQEIKSLTDAFPLYEN</sequence>
<dbReference type="EC" id="2.1.2.1" evidence="1"/>
<dbReference type="EMBL" id="AL766848">
    <property type="protein sequence ID" value="CAD46765.1"/>
    <property type="molecule type" value="Genomic_DNA"/>
</dbReference>
<dbReference type="RefSeq" id="WP_000575545.1">
    <property type="nucleotide sequence ID" value="NC_004368.1"/>
</dbReference>
<dbReference type="SMR" id="Q8E5C6"/>
<dbReference type="KEGG" id="san:glyA"/>
<dbReference type="eggNOG" id="COG0112">
    <property type="taxonomic scope" value="Bacteria"/>
</dbReference>
<dbReference type="HOGENOM" id="CLU_022477_2_1_9"/>
<dbReference type="UniPathway" id="UPA00193"/>
<dbReference type="UniPathway" id="UPA00288">
    <property type="reaction ID" value="UER01023"/>
</dbReference>
<dbReference type="Proteomes" id="UP000000823">
    <property type="component" value="Chromosome"/>
</dbReference>
<dbReference type="GO" id="GO:0005829">
    <property type="term" value="C:cytosol"/>
    <property type="evidence" value="ECO:0007669"/>
    <property type="project" value="TreeGrafter"/>
</dbReference>
<dbReference type="GO" id="GO:0004372">
    <property type="term" value="F:glycine hydroxymethyltransferase activity"/>
    <property type="evidence" value="ECO:0007669"/>
    <property type="project" value="UniProtKB-UniRule"/>
</dbReference>
<dbReference type="GO" id="GO:0030170">
    <property type="term" value="F:pyridoxal phosphate binding"/>
    <property type="evidence" value="ECO:0007669"/>
    <property type="project" value="UniProtKB-UniRule"/>
</dbReference>
<dbReference type="GO" id="GO:0019264">
    <property type="term" value="P:glycine biosynthetic process from serine"/>
    <property type="evidence" value="ECO:0007669"/>
    <property type="project" value="UniProtKB-UniRule"/>
</dbReference>
<dbReference type="GO" id="GO:0035999">
    <property type="term" value="P:tetrahydrofolate interconversion"/>
    <property type="evidence" value="ECO:0007669"/>
    <property type="project" value="UniProtKB-UniRule"/>
</dbReference>
<dbReference type="CDD" id="cd00378">
    <property type="entry name" value="SHMT"/>
    <property type="match status" value="1"/>
</dbReference>
<dbReference type="FunFam" id="3.40.640.10:FF:000001">
    <property type="entry name" value="Serine hydroxymethyltransferase"/>
    <property type="match status" value="1"/>
</dbReference>
<dbReference type="FunFam" id="3.90.1150.10:FF:000072">
    <property type="entry name" value="Serine hydroxymethyltransferase"/>
    <property type="match status" value="1"/>
</dbReference>
<dbReference type="Gene3D" id="3.90.1150.10">
    <property type="entry name" value="Aspartate Aminotransferase, domain 1"/>
    <property type="match status" value="1"/>
</dbReference>
<dbReference type="Gene3D" id="3.40.640.10">
    <property type="entry name" value="Type I PLP-dependent aspartate aminotransferase-like (Major domain)"/>
    <property type="match status" value="1"/>
</dbReference>
<dbReference type="HAMAP" id="MF_00051">
    <property type="entry name" value="SHMT"/>
    <property type="match status" value="1"/>
</dbReference>
<dbReference type="InterPro" id="IPR015424">
    <property type="entry name" value="PyrdxlP-dep_Trfase"/>
</dbReference>
<dbReference type="InterPro" id="IPR015421">
    <property type="entry name" value="PyrdxlP-dep_Trfase_major"/>
</dbReference>
<dbReference type="InterPro" id="IPR015422">
    <property type="entry name" value="PyrdxlP-dep_Trfase_small"/>
</dbReference>
<dbReference type="InterPro" id="IPR001085">
    <property type="entry name" value="Ser_HO-MeTrfase"/>
</dbReference>
<dbReference type="InterPro" id="IPR049943">
    <property type="entry name" value="Ser_HO-MeTrfase-like"/>
</dbReference>
<dbReference type="InterPro" id="IPR019798">
    <property type="entry name" value="Ser_HO-MeTrfase_PLP_BS"/>
</dbReference>
<dbReference type="InterPro" id="IPR039429">
    <property type="entry name" value="SHMT-like_dom"/>
</dbReference>
<dbReference type="NCBIfam" id="NF000586">
    <property type="entry name" value="PRK00011.1"/>
    <property type="match status" value="1"/>
</dbReference>
<dbReference type="PANTHER" id="PTHR11680">
    <property type="entry name" value="SERINE HYDROXYMETHYLTRANSFERASE"/>
    <property type="match status" value="1"/>
</dbReference>
<dbReference type="PANTHER" id="PTHR11680:SF35">
    <property type="entry name" value="SERINE HYDROXYMETHYLTRANSFERASE 1"/>
    <property type="match status" value="1"/>
</dbReference>
<dbReference type="Pfam" id="PF00464">
    <property type="entry name" value="SHMT"/>
    <property type="match status" value="1"/>
</dbReference>
<dbReference type="PIRSF" id="PIRSF000412">
    <property type="entry name" value="SHMT"/>
    <property type="match status" value="1"/>
</dbReference>
<dbReference type="SUPFAM" id="SSF53383">
    <property type="entry name" value="PLP-dependent transferases"/>
    <property type="match status" value="1"/>
</dbReference>
<dbReference type="PROSITE" id="PS00096">
    <property type="entry name" value="SHMT"/>
    <property type="match status" value="1"/>
</dbReference>
<comment type="function">
    <text evidence="1">Catalyzes the reversible interconversion of serine and glycine with tetrahydrofolate (THF) serving as the one-carbon carrier. This reaction serves as the major source of one-carbon groups required for the biosynthesis of purines, thymidylate, methionine, and other important biomolecules. Also exhibits THF-independent aldolase activity toward beta-hydroxyamino acids, producing glycine and aldehydes, via a retro-aldol mechanism.</text>
</comment>
<comment type="catalytic activity">
    <reaction evidence="1">
        <text>(6R)-5,10-methylene-5,6,7,8-tetrahydrofolate + glycine + H2O = (6S)-5,6,7,8-tetrahydrofolate + L-serine</text>
        <dbReference type="Rhea" id="RHEA:15481"/>
        <dbReference type="ChEBI" id="CHEBI:15377"/>
        <dbReference type="ChEBI" id="CHEBI:15636"/>
        <dbReference type="ChEBI" id="CHEBI:33384"/>
        <dbReference type="ChEBI" id="CHEBI:57305"/>
        <dbReference type="ChEBI" id="CHEBI:57453"/>
        <dbReference type="EC" id="2.1.2.1"/>
    </reaction>
</comment>
<comment type="cofactor">
    <cofactor evidence="1">
        <name>pyridoxal 5'-phosphate</name>
        <dbReference type="ChEBI" id="CHEBI:597326"/>
    </cofactor>
</comment>
<comment type="pathway">
    <text evidence="1">One-carbon metabolism; tetrahydrofolate interconversion.</text>
</comment>
<comment type="pathway">
    <text evidence="1">Amino-acid biosynthesis; glycine biosynthesis; glycine from L-serine: step 1/1.</text>
</comment>
<comment type="subunit">
    <text evidence="1">Homodimer.</text>
</comment>
<comment type="subcellular location">
    <subcellularLocation>
        <location evidence="1">Cytoplasm</location>
    </subcellularLocation>
</comment>
<comment type="similarity">
    <text evidence="1">Belongs to the SHMT family.</text>
</comment>
<proteinExistence type="inferred from homology"/>
<feature type="chain" id="PRO_0000113669" description="Serine hydroxymethyltransferase">
    <location>
        <begin position="1"/>
        <end position="418"/>
    </location>
</feature>
<feature type="binding site" evidence="1">
    <location>
        <position position="121"/>
    </location>
    <ligand>
        <name>(6S)-5,6,7,8-tetrahydrofolate</name>
        <dbReference type="ChEBI" id="CHEBI:57453"/>
    </ligand>
</feature>
<feature type="binding site" evidence="1">
    <location>
        <begin position="125"/>
        <end position="127"/>
    </location>
    <ligand>
        <name>(6S)-5,6,7,8-tetrahydrofolate</name>
        <dbReference type="ChEBI" id="CHEBI:57453"/>
    </ligand>
</feature>
<feature type="binding site" evidence="1">
    <location>
        <begin position="355"/>
        <end position="357"/>
    </location>
    <ligand>
        <name>(6S)-5,6,7,8-tetrahydrofolate</name>
        <dbReference type="ChEBI" id="CHEBI:57453"/>
    </ligand>
</feature>
<feature type="site" description="Plays an important role in substrate specificity" evidence="1">
    <location>
        <position position="229"/>
    </location>
</feature>
<feature type="modified residue" description="N6-(pyridoxal phosphate)lysine" evidence="1">
    <location>
        <position position="230"/>
    </location>
</feature>
<keyword id="KW-0028">Amino-acid biosynthesis</keyword>
<keyword id="KW-0963">Cytoplasm</keyword>
<keyword id="KW-0554">One-carbon metabolism</keyword>
<keyword id="KW-0663">Pyridoxal phosphate</keyword>
<keyword id="KW-0808">Transferase</keyword>
<reference key="1">
    <citation type="journal article" date="2002" name="Mol. Microbiol.">
        <title>Genome sequence of Streptococcus agalactiae, a pathogen causing invasive neonatal disease.</title>
        <authorList>
            <person name="Glaser P."/>
            <person name="Rusniok C."/>
            <person name="Buchrieser C."/>
            <person name="Chevalier F."/>
            <person name="Frangeul L."/>
            <person name="Msadek T."/>
            <person name="Zouine M."/>
            <person name="Couve E."/>
            <person name="Lalioui L."/>
            <person name="Poyart C."/>
            <person name="Trieu-Cuot P."/>
            <person name="Kunst F."/>
        </authorList>
    </citation>
    <scope>NUCLEOTIDE SEQUENCE [LARGE SCALE GENOMIC DNA]</scope>
    <source>
        <strain>NEM316</strain>
    </source>
</reference>
<organism>
    <name type="scientific">Streptococcus agalactiae serotype III (strain NEM316)</name>
    <dbReference type="NCBI Taxonomy" id="211110"/>
    <lineage>
        <taxon>Bacteria</taxon>
        <taxon>Bacillati</taxon>
        <taxon>Bacillota</taxon>
        <taxon>Bacilli</taxon>
        <taxon>Lactobacillales</taxon>
        <taxon>Streptococcaceae</taxon>
        <taxon>Streptococcus</taxon>
    </lineage>
</organism>
<gene>
    <name evidence="1" type="primary">glyA</name>
    <name type="ordered locus">gbs1106</name>
</gene>